<comment type="catalytic activity">
    <reaction evidence="1">
        <text>L-histidinol phosphate + 2-oxoglutarate = 3-(imidazol-4-yl)-2-oxopropyl phosphate + L-glutamate</text>
        <dbReference type="Rhea" id="RHEA:23744"/>
        <dbReference type="ChEBI" id="CHEBI:16810"/>
        <dbReference type="ChEBI" id="CHEBI:29985"/>
        <dbReference type="ChEBI" id="CHEBI:57766"/>
        <dbReference type="ChEBI" id="CHEBI:57980"/>
        <dbReference type="EC" id="2.6.1.9"/>
    </reaction>
</comment>
<comment type="cofactor">
    <cofactor evidence="1">
        <name>pyridoxal 5'-phosphate</name>
        <dbReference type="ChEBI" id="CHEBI:597326"/>
    </cofactor>
</comment>
<comment type="pathway">
    <text evidence="1">Amino-acid biosynthesis; L-histidine biosynthesis; L-histidine from 5-phospho-alpha-D-ribose 1-diphosphate: step 7/9.</text>
</comment>
<comment type="subunit">
    <text evidence="1">Homodimer.</text>
</comment>
<comment type="similarity">
    <text evidence="1">Belongs to the class-II pyridoxal-phosphate-dependent aminotransferase family. Histidinol-phosphate aminotransferase subfamily.</text>
</comment>
<dbReference type="EC" id="2.6.1.9" evidence="1"/>
<dbReference type="EMBL" id="CP000238">
    <property type="protein sequence ID" value="ABF14107.1"/>
    <property type="molecule type" value="Genomic_DNA"/>
</dbReference>
<dbReference type="RefSeq" id="WP_011520579.1">
    <property type="nucleotide sequence ID" value="NC_007984.1"/>
</dbReference>
<dbReference type="SMR" id="Q1LT68"/>
<dbReference type="STRING" id="374463.BCI_0403"/>
<dbReference type="KEGG" id="bci:BCI_0403"/>
<dbReference type="HOGENOM" id="CLU_017584_3_1_6"/>
<dbReference type="OrthoDB" id="9813612at2"/>
<dbReference type="UniPathway" id="UPA00031">
    <property type="reaction ID" value="UER00012"/>
</dbReference>
<dbReference type="Proteomes" id="UP000002427">
    <property type="component" value="Chromosome"/>
</dbReference>
<dbReference type="GO" id="GO:0004400">
    <property type="term" value="F:histidinol-phosphate transaminase activity"/>
    <property type="evidence" value="ECO:0007669"/>
    <property type="project" value="UniProtKB-UniRule"/>
</dbReference>
<dbReference type="GO" id="GO:0030170">
    <property type="term" value="F:pyridoxal phosphate binding"/>
    <property type="evidence" value="ECO:0007669"/>
    <property type="project" value="InterPro"/>
</dbReference>
<dbReference type="GO" id="GO:0000105">
    <property type="term" value="P:L-histidine biosynthetic process"/>
    <property type="evidence" value="ECO:0007669"/>
    <property type="project" value="UniProtKB-UniRule"/>
</dbReference>
<dbReference type="CDD" id="cd00609">
    <property type="entry name" value="AAT_like"/>
    <property type="match status" value="1"/>
</dbReference>
<dbReference type="Gene3D" id="3.90.1150.10">
    <property type="entry name" value="Aspartate Aminotransferase, domain 1"/>
    <property type="match status" value="1"/>
</dbReference>
<dbReference type="Gene3D" id="3.40.640.10">
    <property type="entry name" value="Type I PLP-dependent aspartate aminotransferase-like (Major domain)"/>
    <property type="match status" value="1"/>
</dbReference>
<dbReference type="HAMAP" id="MF_01023">
    <property type="entry name" value="HisC_aminotrans_2"/>
    <property type="match status" value="1"/>
</dbReference>
<dbReference type="InterPro" id="IPR001917">
    <property type="entry name" value="Aminotrans_II_pyridoxalP_BS"/>
</dbReference>
<dbReference type="InterPro" id="IPR004839">
    <property type="entry name" value="Aminotransferase_I/II_large"/>
</dbReference>
<dbReference type="InterPro" id="IPR005861">
    <property type="entry name" value="HisP_aminotrans"/>
</dbReference>
<dbReference type="InterPro" id="IPR015424">
    <property type="entry name" value="PyrdxlP-dep_Trfase"/>
</dbReference>
<dbReference type="InterPro" id="IPR015421">
    <property type="entry name" value="PyrdxlP-dep_Trfase_major"/>
</dbReference>
<dbReference type="InterPro" id="IPR015422">
    <property type="entry name" value="PyrdxlP-dep_Trfase_small"/>
</dbReference>
<dbReference type="NCBIfam" id="TIGR01141">
    <property type="entry name" value="hisC"/>
    <property type="match status" value="1"/>
</dbReference>
<dbReference type="PANTHER" id="PTHR42885:SF2">
    <property type="entry name" value="HISTIDINOL-PHOSPHATE AMINOTRANSFERASE"/>
    <property type="match status" value="1"/>
</dbReference>
<dbReference type="PANTHER" id="PTHR42885">
    <property type="entry name" value="HISTIDINOL-PHOSPHATE AMINOTRANSFERASE-RELATED"/>
    <property type="match status" value="1"/>
</dbReference>
<dbReference type="Pfam" id="PF00155">
    <property type="entry name" value="Aminotran_1_2"/>
    <property type="match status" value="1"/>
</dbReference>
<dbReference type="SUPFAM" id="SSF53383">
    <property type="entry name" value="PLP-dependent transferases"/>
    <property type="match status" value="1"/>
</dbReference>
<dbReference type="PROSITE" id="PS00599">
    <property type="entry name" value="AA_TRANSFER_CLASS_2"/>
    <property type="match status" value="1"/>
</dbReference>
<name>HIS8_BAUCH</name>
<proteinExistence type="inferred from homology"/>
<gene>
    <name evidence="1" type="primary">hisC</name>
    <name type="ordered locus">BCI_0403</name>
</gene>
<sequence>MSILNLARTNVLTLEPYQSARRIGGGSQGNIWLNANEYPQPTFYMLRSSNLNRYPDCQPQELLNSYAAYAGVQPNQVLACRGADEGIELLIRTFCEPSKDKILFCPPTYGMYRVSAETFGVAYCAIQALDNWQLDLDTIYAQLDCVKLIYICHPNNPTGNIINPSDIRQLLDITHGRTILVVDEAYIDFYPTASISSWINHYPHLVILRTLSKAFALAGLRCGFILANPDIIKLLLKVIAPYPISRPVVDIAKQALSTKGIHQTKRRVANIDINRNWLIQQLAECSCVSVVFPSVTNYLLVRFHPNYHVFQSLWKKGTILRDQNQQIGLANCLRITIGTSLECQNLLTALQALTLVSHKE</sequence>
<evidence type="ECO:0000255" key="1">
    <source>
        <dbReference type="HAMAP-Rule" id="MF_01023"/>
    </source>
</evidence>
<organism>
    <name type="scientific">Baumannia cicadellinicola subsp. Homalodisca coagulata</name>
    <dbReference type="NCBI Taxonomy" id="374463"/>
    <lineage>
        <taxon>Bacteria</taxon>
        <taxon>Pseudomonadati</taxon>
        <taxon>Pseudomonadota</taxon>
        <taxon>Gammaproteobacteria</taxon>
        <taxon>Candidatus Palibaumannia</taxon>
    </lineage>
</organism>
<accession>Q1LT68</accession>
<feature type="chain" id="PRO_1000063463" description="Histidinol-phosphate aminotransferase">
    <location>
        <begin position="1"/>
        <end position="360"/>
    </location>
</feature>
<feature type="modified residue" description="N6-(pyridoxal phosphate)lysine" evidence="1">
    <location>
        <position position="213"/>
    </location>
</feature>
<keyword id="KW-0028">Amino-acid biosynthesis</keyword>
<keyword id="KW-0032">Aminotransferase</keyword>
<keyword id="KW-0368">Histidine biosynthesis</keyword>
<keyword id="KW-0663">Pyridoxal phosphate</keyword>
<keyword id="KW-1185">Reference proteome</keyword>
<keyword id="KW-0808">Transferase</keyword>
<reference key="1">
    <citation type="journal article" date="2006" name="PLoS Biol.">
        <title>Metabolic complementarity and genomics of the dual bacterial symbiosis of sharpshooters.</title>
        <authorList>
            <person name="Wu D."/>
            <person name="Daugherty S.C."/>
            <person name="Van Aken S.E."/>
            <person name="Pai G.H."/>
            <person name="Watkins K.L."/>
            <person name="Khouri H."/>
            <person name="Tallon L.J."/>
            <person name="Zaborsky J.M."/>
            <person name="Dunbar H.E."/>
            <person name="Tran P.L."/>
            <person name="Moran N.A."/>
            <person name="Eisen J.A."/>
        </authorList>
    </citation>
    <scope>NUCLEOTIDE SEQUENCE [LARGE SCALE GENOMIC DNA]</scope>
</reference>
<protein>
    <recommendedName>
        <fullName evidence="1">Histidinol-phosphate aminotransferase</fullName>
        <ecNumber evidence="1">2.6.1.9</ecNumber>
    </recommendedName>
    <alternativeName>
        <fullName evidence="1">Imidazole acetol-phosphate transaminase</fullName>
    </alternativeName>
</protein>